<feature type="chain" id="PRO_1000014939" description="Chaperone protein HtpG">
    <location>
        <begin position="1"/>
        <end position="634"/>
    </location>
</feature>
<feature type="region of interest" description="A; substrate-binding" evidence="1">
    <location>
        <begin position="1"/>
        <end position="342"/>
    </location>
</feature>
<feature type="region of interest" description="B" evidence="1">
    <location>
        <begin position="343"/>
        <end position="559"/>
    </location>
</feature>
<feature type="region of interest" description="C" evidence="1">
    <location>
        <begin position="560"/>
        <end position="634"/>
    </location>
</feature>
<organism>
    <name type="scientific">Pseudomonas paraeruginosa (strain DSM 24068 / PA7)</name>
    <name type="common">Pseudomonas aeruginosa (strain PA7)</name>
    <dbReference type="NCBI Taxonomy" id="381754"/>
    <lineage>
        <taxon>Bacteria</taxon>
        <taxon>Pseudomonadati</taxon>
        <taxon>Pseudomonadota</taxon>
        <taxon>Gammaproteobacteria</taxon>
        <taxon>Pseudomonadales</taxon>
        <taxon>Pseudomonadaceae</taxon>
        <taxon>Pseudomonas</taxon>
        <taxon>Pseudomonas paraeruginosa</taxon>
    </lineage>
</organism>
<accession>A6V7J7</accession>
<gene>
    <name evidence="1" type="primary">htpG</name>
    <name type="ordered locus">PSPA7_3678</name>
</gene>
<comment type="function">
    <text evidence="1">Molecular chaperone. Has ATPase activity.</text>
</comment>
<comment type="subunit">
    <text evidence="1">Homodimer.</text>
</comment>
<comment type="subcellular location">
    <subcellularLocation>
        <location evidence="1">Cytoplasm</location>
    </subcellularLocation>
</comment>
<comment type="similarity">
    <text evidence="1">Belongs to the heat shock protein 90 family.</text>
</comment>
<proteinExistence type="inferred from homology"/>
<dbReference type="EMBL" id="CP000744">
    <property type="protein sequence ID" value="ABR81297.1"/>
    <property type="molecule type" value="Genomic_DNA"/>
</dbReference>
<dbReference type="RefSeq" id="WP_012076289.1">
    <property type="nucleotide sequence ID" value="NC_009656.1"/>
</dbReference>
<dbReference type="SMR" id="A6V7J7"/>
<dbReference type="KEGG" id="pap:PSPA7_3678"/>
<dbReference type="HOGENOM" id="CLU_006684_3_0_6"/>
<dbReference type="Proteomes" id="UP000001582">
    <property type="component" value="Chromosome"/>
</dbReference>
<dbReference type="GO" id="GO:0005737">
    <property type="term" value="C:cytoplasm"/>
    <property type="evidence" value="ECO:0007669"/>
    <property type="project" value="UniProtKB-SubCell"/>
</dbReference>
<dbReference type="GO" id="GO:0005524">
    <property type="term" value="F:ATP binding"/>
    <property type="evidence" value="ECO:0007669"/>
    <property type="project" value="UniProtKB-UniRule"/>
</dbReference>
<dbReference type="GO" id="GO:0016887">
    <property type="term" value="F:ATP hydrolysis activity"/>
    <property type="evidence" value="ECO:0007669"/>
    <property type="project" value="InterPro"/>
</dbReference>
<dbReference type="GO" id="GO:0140662">
    <property type="term" value="F:ATP-dependent protein folding chaperone"/>
    <property type="evidence" value="ECO:0007669"/>
    <property type="project" value="InterPro"/>
</dbReference>
<dbReference type="GO" id="GO:0051082">
    <property type="term" value="F:unfolded protein binding"/>
    <property type="evidence" value="ECO:0007669"/>
    <property type="project" value="UniProtKB-UniRule"/>
</dbReference>
<dbReference type="CDD" id="cd16927">
    <property type="entry name" value="HATPase_Hsp90-like"/>
    <property type="match status" value="1"/>
</dbReference>
<dbReference type="FunFam" id="1.20.120.790:FF:000008">
    <property type="entry name" value="Chaperone protein HtpG"/>
    <property type="match status" value="1"/>
</dbReference>
<dbReference type="FunFam" id="3.30.230.80:FF:000002">
    <property type="entry name" value="Molecular chaperone HtpG"/>
    <property type="match status" value="1"/>
</dbReference>
<dbReference type="FunFam" id="3.30.565.10:FF:000009">
    <property type="entry name" value="Molecular chaperone HtpG"/>
    <property type="match status" value="1"/>
</dbReference>
<dbReference type="Gene3D" id="3.30.230.80">
    <property type="match status" value="1"/>
</dbReference>
<dbReference type="Gene3D" id="3.40.50.11260">
    <property type="match status" value="1"/>
</dbReference>
<dbReference type="Gene3D" id="1.20.120.790">
    <property type="entry name" value="Heat shock protein 90, C-terminal domain"/>
    <property type="match status" value="1"/>
</dbReference>
<dbReference type="Gene3D" id="3.30.565.10">
    <property type="entry name" value="Histidine kinase-like ATPase, C-terminal domain"/>
    <property type="match status" value="1"/>
</dbReference>
<dbReference type="HAMAP" id="MF_00505">
    <property type="entry name" value="HSP90"/>
    <property type="match status" value="1"/>
</dbReference>
<dbReference type="InterPro" id="IPR036890">
    <property type="entry name" value="HATPase_C_sf"/>
</dbReference>
<dbReference type="InterPro" id="IPR019805">
    <property type="entry name" value="Heat_shock_protein_90_CS"/>
</dbReference>
<dbReference type="InterPro" id="IPR037196">
    <property type="entry name" value="HSP90_C"/>
</dbReference>
<dbReference type="InterPro" id="IPR001404">
    <property type="entry name" value="Hsp90_fam"/>
</dbReference>
<dbReference type="InterPro" id="IPR020575">
    <property type="entry name" value="Hsp90_N"/>
</dbReference>
<dbReference type="InterPro" id="IPR020568">
    <property type="entry name" value="Ribosomal_Su5_D2-typ_SF"/>
</dbReference>
<dbReference type="NCBIfam" id="NF003555">
    <property type="entry name" value="PRK05218.1"/>
    <property type="match status" value="1"/>
</dbReference>
<dbReference type="PANTHER" id="PTHR11528">
    <property type="entry name" value="HEAT SHOCK PROTEIN 90 FAMILY MEMBER"/>
    <property type="match status" value="1"/>
</dbReference>
<dbReference type="Pfam" id="PF13589">
    <property type="entry name" value="HATPase_c_3"/>
    <property type="match status" value="1"/>
</dbReference>
<dbReference type="Pfam" id="PF00183">
    <property type="entry name" value="HSP90"/>
    <property type="match status" value="1"/>
</dbReference>
<dbReference type="PIRSF" id="PIRSF002583">
    <property type="entry name" value="Hsp90"/>
    <property type="match status" value="1"/>
</dbReference>
<dbReference type="PRINTS" id="PR00775">
    <property type="entry name" value="HEATSHOCK90"/>
</dbReference>
<dbReference type="SMART" id="SM00387">
    <property type="entry name" value="HATPase_c"/>
    <property type="match status" value="1"/>
</dbReference>
<dbReference type="SUPFAM" id="SSF55874">
    <property type="entry name" value="ATPase domain of HSP90 chaperone/DNA topoisomerase II/histidine kinase"/>
    <property type="match status" value="1"/>
</dbReference>
<dbReference type="SUPFAM" id="SSF110942">
    <property type="entry name" value="HSP90 C-terminal domain"/>
    <property type="match status" value="1"/>
</dbReference>
<dbReference type="SUPFAM" id="SSF54211">
    <property type="entry name" value="Ribosomal protein S5 domain 2-like"/>
    <property type="match status" value="1"/>
</dbReference>
<dbReference type="PROSITE" id="PS00298">
    <property type="entry name" value="HSP90"/>
    <property type="match status" value="1"/>
</dbReference>
<evidence type="ECO:0000255" key="1">
    <source>
        <dbReference type="HAMAP-Rule" id="MF_00505"/>
    </source>
</evidence>
<reference key="1">
    <citation type="submission" date="2007-06" db="EMBL/GenBank/DDBJ databases">
        <authorList>
            <person name="Dodson R.J."/>
            <person name="Harkins D."/>
            <person name="Paulsen I.T."/>
        </authorList>
    </citation>
    <scope>NUCLEOTIDE SEQUENCE [LARGE SCALE GENOMIC DNA]</scope>
    <source>
        <strain>DSM 24068 / PA7</strain>
    </source>
</reference>
<protein>
    <recommendedName>
        <fullName evidence="1">Chaperone protein HtpG</fullName>
    </recommendedName>
    <alternativeName>
        <fullName evidence="1">Heat shock protein HtpG</fullName>
    </alternativeName>
    <alternativeName>
        <fullName evidence="1">High temperature protein G</fullName>
    </alternativeName>
</protein>
<sequence length="634" mass="71555">MSVETQKETLGFQTEVKQLLHLMIHSLYSNKEIFLRELISNASDAADKLRFEALANPELLEGGAELKIRVSFDKEANTVTLEDNGIGMSREDVVTHLGTIAKSGTADFLKNLSGDQKKDSHLIGQFGVGFYSAFIVADKVDVYSRRAGQPASEGVHWSSKGEGEFDVATIDKPERGTRIVLHLKKGEEEFADGWRLRNVIKKYSDHIALPIELPKEFHGEEAEKPAEPEWETVNRASALWTRPRAEVKDEEYQEFYKHVAHDFENPLSWSHNKVEGKLEYTSLLYVPGRAPFDLYHREAPRGLKLYVQRVFIMDQADEFLPLYLRFIKGVVDSNDLSLNVSREILQKDPVIDSMKSALTKRVLDMLEKLAKNEPEQYKTFWKNFGQVLKEGPAEDFGNKEKIAGLLRFASTGGDSGEQSVALADYIGRMKEGQDKIYYLTGESYSQVKNSPHLEVFRKKGIEVLLLTDRIDEWLMSYLPDFDGKSFVDVARGDLDLGSLDSEEDKKAQEEVAKSKEGLIERLKKVLDEQASEVRVSHRLTDSPAILAIGEQDLGLQMRQILEASGQKVPESKPIFEINPQHPLIEKLDAEPDEDRFGELSHILFDQAALAAGDSLKDPGAYVRRLNKLLVELSA</sequence>
<name>HTPG_PSEP7</name>
<keyword id="KW-0067">ATP-binding</keyword>
<keyword id="KW-0143">Chaperone</keyword>
<keyword id="KW-0963">Cytoplasm</keyword>
<keyword id="KW-0547">Nucleotide-binding</keyword>
<keyword id="KW-0346">Stress response</keyword>